<accession>Q5Y4U8</accession>
<protein>
    <recommendedName>
        <fullName evidence="6">U3-agatoxin-Ao1k</fullName>
        <shortName evidence="6">U3-AGTX-Ao1k</shortName>
    </recommendedName>
    <alternativeName>
        <fullName evidence="5">Beta/delta-agatoxin-4</fullName>
    </alternativeName>
    <alternativeName>
        <fullName evidence="7">Mu-2Aaga_12</fullName>
    </alternativeName>
</protein>
<keyword id="KW-0027">Amidation</keyword>
<keyword id="KW-0903">Direct protein sequencing</keyword>
<keyword id="KW-1015">Disulfide bond</keyword>
<keyword id="KW-0872">Ion channel impairing toxin</keyword>
<keyword id="KW-0960">Knottin</keyword>
<keyword id="KW-0528">Neurotoxin</keyword>
<keyword id="KW-0964">Secreted</keyword>
<keyword id="KW-0732">Signal</keyword>
<keyword id="KW-0800">Toxin</keyword>
<keyword id="KW-0738">Voltage-gated sodium channel impairing toxin</keyword>
<dbReference type="EMBL" id="AY681336">
    <property type="protein sequence ID" value="AAU87896.1"/>
    <property type="molecule type" value="mRNA"/>
</dbReference>
<dbReference type="SMR" id="Q5Y4U8"/>
<dbReference type="ArachnoServer" id="AS000076">
    <property type="toxin name" value="U3-agatoxin-Ao1k"/>
</dbReference>
<dbReference type="GO" id="GO:0005576">
    <property type="term" value="C:extracellular region"/>
    <property type="evidence" value="ECO:0007669"/>
    <property type="project" value="UniProtKB-SubCell"/>
</dbReference>
<dbReference type="GO" id="GO:0017080">
    <property type="term" value="F:sodium channel regulator activity"/>
    <property type="evidence" value="ECO:0007669"/>
    <property type="project" value="UniProtKB-KW"/>
</dbReference>
<dbReference type="GO" id="GO:0090729">
    <property type="term" value="F:toxin activity"/>
    <property type="evidence" value="ECO:0007669"/>
    <property type="project" value="UniProtKB-KW"/>
</dbReference>
<dbReference type="InterPro" id="IPR016328">
    <property type="entry name" value="Beta/delta-agatoxin_fam"/>
</dbReference>
<dbReference type="Pfam" id="PF05980">
    <property type="entry name" value="Toxin_7"/>
    <property type="match status" value="1"/>
</dbReference>
<dbReference type="SUPFAM" id="SSF57059">
    <property type="entry name" value="omega toxin-like"/>
    <property type="match status" value="1"/>
</dbReference>
<dbReference type="PROSITE" id="PS60015">
    <property type="entry name" value="MU_AGATOXIN"/>
    <property type="match status" value="1"/>
</dbReference>
<evidence type="ECO:0000250" key="1"/>
<evidence type="ECO:0000250" key="2">
    <source>
        <dbReference type="UniProtKB" id="P11061"/>
    </source>
</evidence>
<evidence type="ECO:0000255" key="3"/>
<evidence type="ECO:0000269" key="4">
    <source>
    </source>
</evidence>
<evidence type="ECO:0000303" key="5">
    <source>
    </source>
</evidence>
<evidence type="ECO:0000305" key="6"/>
<evidence type="ECO:0000312" key="7">
    <source>
        <dbReference type="EMBL" id="AAU87896.1"/>
    </source>
</evidence>
<proteinExistence type="evidence at protein level"/>
<comment type="function">
    <text evidence="4">Insecticidal neurotoxin that modulates the insect Nav channel (DmNaV1/tipE (para/tipE)) in a unique manner, with both the activation and inactivation processes being affected. The voltage dependence of activation is shifted toward more hyperpolarized potentials (analogous to site 4 toxins) and a non-inactivating persistent sodium current is induced (site 3-like action). Interestingly, both effects take place in a voltage-dependent manner, producing a bell-shaped curve between -80 and 0 mV. Compared to beta/delta-agatoxin-1 to -3, this toxin appears to affect the insect sodium channel only weakly.</text>
</comment>
<comment type="subcellular location">
    <subcellularLocation>
        <location evidence="4">Secreted</location>
    </subcellularLocation>
</comment>
<comment type="tissue specificity">
    <text evidence="4">Expressed by the venom gland.</text>
</comment>
<comment type="domain">
    <text evidence="1">The presence of a 'disulfide through disulfide knot' structurally defines this protein as a knottin.</text>
</comment>
<comment type="mass spectrometry"/>
<comment type="miscellaneous">
    <text evidence="1">Negative results: does not affect mammalian sodium channels (Nav).</text>
</comment>
<comment type="similarity">
    <text evidence="6">Belongs to the neurotoxin 07 (Beta/delta-agtx) family. 03 (aga-4) subfamily. Aga sub-subfamily.</text>
</comment>
<reference key="1">
    <citation type="journal article" date="2005" name="Proteins">
        <title>A novel strategy for the identification of toxinlike structures in spider venom.</title>
        <authorList>
            <person name="Kozlov S.A."/>
            <person name="Malyavka A."/>
            <person name="McCutchen B."/>
            <person name="Lu A."/>
            <person name="Schepers E."/>
            <person name="Herrmann R."/>
            <person name="Grishin E.V."/>
        </authorList>
    </citation>
    <scope>NUCLEOTIDE SEQUENCE [MRNA]</scope>
    <source>
        <tissue>Venom gland</tissue>
    </source>
</reference>
<reference key="2">
    <citation type="journal article" date="2010" name="J. Biol. Chem.">
        <title>Unique bell-shaped voltage-dependent modulation of Na+ channel gating by novel insect-selective toxins from the spider Agelena orientalis.</title>
        <authorList>
            <person name="Billen B."/>
            <person name="Vassilevski A."/>
            <person name="Nikolsky A."/>
            <person name="Debaveye S."/>
            <person name="Tytgat J."/>
            <person name="Grishin E."/>
        </authorList>
    </citation>
    <scope>PROTEIN SEQUENCE OF 35-71</scope>
    <scope>FUNCTION</scope>
    <scope>SUBCELLULAR LOCATION</scope>
    <scope>TISSUE SPECIFICITY</scope>
    <scope>MASS SPECTROMETRY</scope>
    <scope>AMIDATION AT SER-71</scope>
    <source>
        <tissue>Venom</tissue>
    </source>
</reference>
<name>T4G1K_AGEOR</name>
<organism>
    <name type="scientific">Agelena orientalis</name>
    <name type="common">Funnel-web spider</name>
    <dbReference type="NCBI Taxonomy" id="293813"/>
    <lineage>
        <taxon>Eukaryota</taxon>
        <taxon>Metazoa</taxon>
        <taxon>Ecdysozoa</taxon>
        <taxon>Arthropoda</taxon>
        <taxon>Chelicerata</taxon>
        <taxon>Arachnida</taxon>
        <taxon>Araneae</taxon>
        <taxon>Araneomorphae</taxon>
        <taxon>Entelegynae</taxon>
        <taxon>Agelenidae</taxon>
        <taxon>Agelena</taxon>
    </lineage>
</organism>
<sequence>MRTIISLLLLSAMVFAVIEAISLEEGLQLFEGERGCVGENQQCADWAGLHCCSGYYCTCRYFPKCICRKDSGK</sequence>
<feature type="signal peptide" evidence="3">
    <location>
        <begin position="1"/>
        <end position="20"/>
    </location>
</feature>
<feature type="propeptide" id="PRO_5000093675" evidence="4">
    <location>
        <begin position="21"/>
        <end position="34"/>
    </location>
</feature>
<feature type="chain" id="PRO_5000093676" description="U3-agatoxin-Ao1k" evidence="4">
    <location>
        <begin position="35"/>
        <end position="71"/>
    </location>
</feature>
<feature type="modified residue" description="Serine amide" evidence="4">
    <location>
        <position position="71"/>
    </location>
</feature>
<feature type="disulfide bond" evidence="2">
    <location>
        <begin position="36"/>
        <end position="52"/>
    </location>
</feature>
<feature type="disulfide bond" evidence="2">
    <location>
        <begin position="43"/>
        <end position="57"/>
    </location>
</feature>
<feature type="disulfide bond" evidence="2">
    <location>
        <begin position="51"/>
        <end position="67"/>
    </location>
</feature>
<feature type="disulfide bond" evidence="2">
    <location>
        <begin position="59"/>
        <end position="65"/>
    </location>
</feature>